<gene>
    <name evidence="1" type="primary">groEL2</name>
    <name evidence="1" type="synonym">groL2</name>
    <name type="ordered locus">Arth_2886</name>
</gene>
<name>CH602_ARTS2</name>
<sequence>MAKQLAFNDAARRSLEAGIDKLANTVKVTLGPRGRNVVLDKKWGAPTITNDGVTIAREVELDDPFENLGAQLAKEVATKTNDVAGDGTTTATVLAQALVKEGLRNVAAGAAPGQIKRGIEVSVEAVAARLLENARPVEGSQVANVAAISAQSDEIGELLAEAFGKVGKDGVITIEESSTTQTELVLTEGMQFDKGYLSPYFVTDAERQEAVLEDALILINQGKISSVQEFLPLLEKALQSSKPLFIIAEDVEGEALSTLIVNRIRGTLNVVAVKAPGFGDRRKAMLQDIATLTGAQVVSPELGLSLDSVGLEVLGTARRITVTKDNTTIVDGAGTAEDVAARVAQLRAELTRTDSDWDKEKLQERLAKLAGGIGVIKVGAATEVELKEKKHRIEDAVSSTRAALEEGIVAGGGSALIHALKALDEDPAVTALEGDAASAVGIVRRALVQPLRWIAQNAGFDGYVVAAKVAESAVNQGFNAKSGDYEDLIAAGVIDPVKVTRAALRNAASIAALVLTTETLVVEKPADEDEHAGHKH</sequence>
<keyword id="KW-0067">ATP-binding</keyword>
<keyword id="KW-0143">Chaperone</keyword>
<keyword id="KW-0963">Cytoplasm</keyword>
<keyword id="KW-0413">Isomerase</keyword>
<keyword id="KW-0547">Nucleotide-binding</keyword>
<keyword id="KW-1185">Reference proteome</keyword>
<comment type="function">
    <text evidence="1">Together with its co-chaperonin GroES, plays an essential role in assisting protein folding. The GroEL-GroES system forms a nano-cage that allows encapsulation of the non-native substrate proteins and provides a physical environment optimized to promote and accelerate protein folding.</text>
</comment>
<comment type="catalytic activity">
    <reaction evidence="1">
        <text>ATP + H2O + a folded polypeptide = ADP + phosphate + an unfolded polypeptide.</text>
        <dbReference type="EC" id="5.6.1.7"/>
    </reaction>
</comment>
<comment type="subunit">
    <text evidence="1">Forms a cylinder of 14 subunits composed of two heptameric rings stacked back-to-back. Interacts with the co-chaperonin GroES.</text>
</comment>
<comment type="subcellular location">
    <subcellularLocation>
        <location evidence="1">Cytoplasm</location>
    </subcellularLocation>
</comment>
<comment type="similarity">
    <text evidence="1">Belongs to the chaperonin (HSP60) family.</text>
</comment>
<evidence type="ECO:0000255" key="1">
    <source>
        <dbReference type="HAMAP-Rule" id="MF_00600"/>
    </source>
</evidence>
<dbReference type="EC" id="5.6.1.7" evidence="1"/>
<dbReference type="EMBL" id="CP000454">
    <property type="protein sequence ID" value="ABK04265.1"/>
    <property type="molecule type" value="Genomic_DNA"/>
</dbReference>
<dbReference type="RefSeq" id="WP_011692725.1">
    <property type="nucleotide sequence ID" value="NC_008541.1"/>
</dbReference>
<dbReference type="SMR" id="A0JYZ5"/>
<dbReference type="STRING" id="290399.Arth_2886"/>
<dbReference type="KEGG" id="art:Arth_2886"/>
<dbReference type="eggNOG" id="COG0459">
    <property type="taxonomic scope" value="Bacteria"/>
</dbReference>
<dbReference type="HOGENOM" id="CLU_016503_6_1_11"/>
<dbReference type="OrthoDB" id="9766614at2"/>
<dbReference type="Proteomes" id="UP000000754">
    <property type="component" value="Chromosome"/>
</dbReference>
<dbReference type="GO" id="GO:0005737">
    <property type="term" value="C:cytoplasm"/>
    <property type="evidence" value="ECO:0007669"/>
    <property type="project" value="UniProtKB-SubCell"/>
</dbReference>
<dbReference type="GO" id="GO:0005524">
    <property type="term" value="F:ATP binding"/>
    <property type="evidence" value="ECO:0007669"/>
    <property type="project" value="UniProtKB-UniRule"/>
</dbReference>
<dbReference type="GO" id="GO:0140662">
    <property type="term" value="F:ATP-dependent protein folding chaperone"/>
    <property type="evidence" value="ECO:0007669"/>
    <property type="project" value="InterPro"/>
</dbReference>
<dbReference type="GO" id="GO:0016853">
    <property type="term" value="F:isomerase activity"/>
    <property type="evidence" value="ECO:0007669"/>
    <property type="project" value="UniProtKB-KW"/>
</dbReference>
<dbReference type="GO" id="GO:0051082">
    <property type="term" value="F:unfolded protein binding"/>
    <property type="evidence" value="ECO:0007669"/>
    <property type="project" value="UniProtKB-UniRule"/>
</dbReference>
<dbReference type="GO" id="GO:0042026">
    <property type="term" value="P:protein refolding"/>
    <property type="evidence" value="ECO:0007669"/>
    <property type="project" value="UniProtKB-UniRule"/>
</dbReference>
<dbReference type="CDD" id="cd03344">
    <property type="entry name" value="GroEL"/>
    <property type="match status" value="1"/>
</dbReference>
<dbReference type="FunFam" id="3.50.7.10:FF:000001">
    <property type="entry name" value="60 kDa chaperonin"/>
    <property type="match status" value="1"/>
</dbReference>
<dbReference type="Gene3D" id="3.50.7.10">
    <property type="entry name" value="GroEL"/>
    <property type="match status" value="1"/>
</dbReference>
<dbReference type="Gene3D" id="1.10.560.10">
    <property type="entry name" value="GroEL-like equatorial domain"/>
    <property type="match status" value="1"/>
</dbReference>
<dbReference type="Gene3D" id="3.30.260.10">
    <property type="entry name" value="TCP-1-like chaperonin intermediate domain"/>
    <property type="match status" value="1"/>
</dbReference>
<dbReference type="HAMAP" id="MF_00600">
    <property type="entry name" value="CH60"/>
    <property type="match status" value="1"/>
</dbReference>
<dbReference type="InterPro" id="IPR001844">
    <property type="entry name" value="Cpn60/GroEL"/>
</dbReference>
<dbReference type="InterPro" id="IPR002423">
    <property type="entry name" value="Cpn60/GroEL/TCP-1"/>
</dbReference>
<dbReference type="InterPro" id="IPR027409">
    <property type="entry name" value="GroEL-like_apical_dom_sf"/>
</dbReference>
<dbReference type="InterPro" id="IPR027413">
    <property type="entry name" value="GROEL-like_equatorial_sf"/>
</dbReference>
<dbReference type="InterPro" id="IPR027410">
    <property type="entry name" value="TCP-1-like_intermed_sf"/>
</dbReference>
<dbReference type="NCBIfam" id="TIGR02348">
    <property type="entry name" value="GroEL"/>
    <property type="match status" value="1"/>
</dbReference>
<dbReference type="NCBIfam" id="NF000592">
    <property type="entry name" value="PRK00013.1"/>
    <property type="match status" value="1"/>
</dbReference>
<dbReference type="NCBIfam" id="NF009487">
    <property type="entry name" value="PRK12849.1"/>
    <property type="match status" value="1"/>
</dbReference>
<dbReference type="NCBIfam" id="NF009488">
    <property type="entry name" value="PRK12850.1"/>
    <property type="match status" value="1"/>
</dbReference>
<dbReference type="NCBIfam" id="NF009489">
    <property type="entry name" value="PRK12851.1"/>
    <property type="match status" value="1"/>
</dbReference>
<dbReference type="PANTHER" id="PTHR45633">
    <property type="entry name" value="60 KDA HEAT SHOCK PROTEIN, MITOCHONDRIAL"/>
    <property type="match status" value="1"/>
</dbReference>
<dbReference type="Pfam" id="PF00118">
    <property type="entry name" value="Cpn60_TCP1"/>
    <property type="match status" value="1"/>
</dbReference>
<dbReference type="PRINTS" id="PR00298">
    <property type="entry name" value="CHAPERONIN60"/>
</dbReference>
<dbReference type="SUPFAM" id="SSF52029">
    <property type="entry name" value="GroEL apical domain-like"/>
    <property type="match status" value="1"/>
</dbReference>
<dbReference type="SUPFAM" id="SSF48592">
    <property type="entry name" value="GroEL equatorial domain-like"/>
    <property type="match status" value="1"/>
</dbReference>
<dbReference type="SUPFAM" id="SSF54849">
    <property type="entry name" value="GroEL-intermediate domain like"/>
    <property type="match status" value="1"/>
</dbReference>
<feature type="chain" id="PRO_0000331969" description="Chaperonin GroEL 2">
    <location>
        <begin position="1"/>
        <end position="536"/>
    </location>
</feature>
<feature type="binding site" evidence="1">
    <location>
        <begin position="29"/>
        <end position="32"/>
    </location>
    <ligand>
        <name>ATP</name>
        <dbReference type="ChEBI" id="CHEBI:30616"/>
    </ligand>
</feature>
<feature type="binding site" evidence="1">
    <location>
        <begin position="86"/>
        <end position="90"/>
    </location>
    <ligand>
        <name>ATP</name>
        <dbReference type="ChEBI" id="CHEBI:30616"/>
    </ligand>
</feature>
<feature type="binding site" evidence="1">
    <location>
        <position position="412"/>
    </location>
    <ligand>
        <name>ATP</name>
        <dbReference type="ChEBI" id="CHEBI:30616"/>
    </ligand>
</feature>
<feature type="binding site" evidence="1">
    <location>
        <position position="495"/>
    </location>
    <ligand>
        <name>ATP</name>
        <dbReference type="ChEBI" id="CHEBI:30616"/>
    </ligand>
</feature>
<organism>
    <name type="scientific">Arthrobacter sp. (strain FB24)</name>
    <dbReference type="NCBI Taxonomy" id="290399"/>
    <lineage>
        <taxon>Bacteria</taxon>
        <taxon>Bacillati</taxon>
        <taxon>Actinomycetota</taxon>
        <taxon>Actinomycetes</taxon>
        <taxon>Micrococcales</taxon>
        <taxon>Micrococcaceae</taxon>
        <taxon>Arthrobacter</taxon>
    </lineage>
</organism>
<proteinExistence type="inferred from homology"/>
<accession>A0JYZ5</accession>
<reference key="1">
    <citation type="journal article" date="2013" name="Stand. Genomic Sci.">
        <title>Complete genome sequence of Arthrobacter sp. strain FB24.</title>
        <authorList>
            <person name="Nakatsu C.H."/>
            <person name="Barabote R."/>
            <person name="Thompson S."/>
            <person name="Bruce D."/>
            <person name="Detter C."/>
            <person name="Brettin T."/>
            <person name="Han C."/>
            <person name="Beasley F."/>
            <person name="Chen W."/>
            <person name="Konopka A."/>
            <person name="Xie G."/>
        </authorList>
    </citation>
    <scope>NUCLEOTIDE SEQUENCE [LARGE SCALE GENOMIC DNA]</scope>
    <source>
        <strain>FB24</strain>
    </source>
</reference>
<protein>
    <recommendedName>
        <fullName evidence="1">Chaperonin GroEL 2</fullName>
        <ecNumber evidence="1">5.6.1.7</ecNumber>
    </recommendedName>
    <alternativeName>
        <fullName evidence="1">60 kDa chaperonin 2</fullName>
    </alternativeName>
    <alternativeName>
        <fullName evidence="1">Chaperonin-60 2</fullName>
        <shortName evidence="1">Cpn60 2</shortName>
    </alternativeName>
</protein>